<keyword id="KW-0687">Ribonucleoprotein</keyword>
<keyword id="KW-0689">Ribosomal protein</keyword>
<feature type="chain" id="PRO_1000196485" description="Small ribosomal subunit protein bS16">
    <location>
        <begin position="1"/>
        <end position="95"/>
    </location>
</feature>
<reference key="1">
    <citation type="journal article" date="2011" name="J. Bacteriol.">
        <title>Genome sequence of Thermotoga sp. strain RQ2, a hyperthermophilic bacterium isolated from a geothermally heated region of the seafloor near Ribeira Quente, the Azores.</title>
        <authorList>
            <person name="Swithers K.S."/>
            <person name="DiPippo J.L."/>
            <person name="Bruce D.C."/>
            <person name="Detter C."/>
            <person name="Tapia R."/>
            <person name="Han S."/>
            <person name="Saunders E."/>
            <person name="Goodwin L.A."/>
            <person name="Han J."/>
            <person name="Woyke T."/>
            <person name="Pitluck S."/>
            <person name="Pennacchio L."/>
            <person name="Nolan M."/>
            <person name="Mikhailova N."/>
            <person name="Lykidis A."/>
            <person name="Land M.L."/>
            <person name="Brettin T."/>
            <person name="Stetter K.O."/>
            <person name="Nelson K.E."/>
            <person name="Gogarten J.P."/>
            <person name="Noll K.M."/>
        </authorList>
    </citation>
    <scope>NUCLEOTIDE SEQUENCE [LARGE SCALE GENOMIC DNA]</scope>
    <source>
        <strain>RQ2</strain>
    </source>
</reference>
<proteinExistence type="inferred from homology"/>
<organism>
    <name type="scientific">Thermotoga sp. (strain RQ2)</name>
    <dbReference type="NCBI Taxonomy" id="126740"/>
    <lineage>
        <taxon>Bacteria</taxon>
        <taxon>Thermotogati</taxon>
        <taxon>Thermotogota</taxon>
        <taxon>Thermotogae</taxon>
        <taxon>Thermotogales</taxon>
        <taxon>Thermotogaceae</taxon>
        <taxon>Thermotoga</taxon>
    </lineage>
</organism>
<gene>
    <name evidence="1" type="primary">rpsP</name>
    <name type="ordered locus">TRQ2_1229</name>
</gene>
<dbReference type="EMBL" id="CP000969">
    <property type="protein sequence ID" value="ACB09573.1"/>
    <property type="molecule type" value="Genomic_DNA"/>
</dbReference>
<dbReference type="RefSeq" id="WP_004081979.1">
    <property type="nucleotide sequence ID" value="NC_010483.1"/>
</dbReference>
<dbReference type="SMR" id="B1LB75"/>
<dbReference type="KEGG" id="trq:TRQ2_1229"/>
<dbReference type="HOGENOM" id="CLU_100590_5_0_0"/>
<dbReference type="Proteomes" id="UP000001687">
    <property type="component" value="Chromosome"/>
</dbReference>
<dbReference type="GO" id="GO:0005737">
    <property type="term" value="C:cytoplasm"/>
    <property type="evidence" value="ECO:0007669"/>
    <property type="project" value="UniProtKB-ARBA"/>
</dbReference>
<dbReference type="GO" id="GO:0015935">
    <property type="term" value="C:small ribosomal subunit"/>
    <property type="evidence" value="ECO:0007669"/>
    <property type="project" value="TreeGrafter"/>
</dbReference>
<dbReference type="GO" id="GO:0003735">
    <property type="term" value="F:structural constituent of ribosome"/>
    <property type="evidence" value="ECO:0007669"/>
    <property type="project" value="InterPro"/>
</dbReference>
<dbReference type="GO" id="GO:0006412">
    <property type="term" value="P:translation"/>
    <property type="evidence" value="ECO:0007669"/>
    <property type="project" value="UniProtKB-UniRule"/>
</dbReference>
<dbReference type="FunFam" id="3.30.1320.10:FF:000005">
    <property type="entry name" value="30S ribosomal protein S16"/>
    <property type="match status" value="1"/>
</dbReference>
<dbReference type="Gene3D" id="3.30.1320.10">
    <property type="match status" value="1"/>
</dbReference>
<dbReference type="HAMAP" id="MF_00385">
    <property type="entry name" value="Ribosomal_bS16"/>
    <property type="match status" value="1"/>
</dbReference>
<dbReference type="InterPro" id="IPR000307">
    <property type="entry name" value="Ribosomal_bS16"/>
</dbReference>
<dbReference type="InterPro" id="IPR020592">
    <property type="entry name" value="Ribosomal_bS16_CS"/>
</dbReference>
<dbReference type="InterPro" id="IPR023803">
    <property type="entry name" value="Ribosomal_bS16_dom_sf"/>
</dbReference>
<dbReference type="NCBIfam" id="TIGR00002">
    <property type="entry name" value="S16"/>
    <property type="match status" value="1"/>
</dbReference>
<dbReference type="PANTHER" id="PTHR12919">
    <property type="entry name" value="30S RIBOSOMAL PROTEIN S16"/>
    <property type="match status" value="1"/>
</dbReference>
<dbReference type="PANTHER" id="PTHR12919:SF20">
    <property type="entry name" value="SMALL RIBOSOMAL SUBUNIT PROTEIN BS16M"/>
    <property type="match status" value="1"/>
</dbReference>
<dbReference type="Pfam" id="PF00886">
    <property type="entry name" value="Ribosomal_S16"/>
    <property type="match status" value="1"/>
</dbReference>
<dbReference type="SUPFAM" id="SSF54565">
    <property type="entry name" value="Ribosomal protein S16"/>
    <property type="match status" value="1"/>
</dbReference>
<dbReference type="PROSITE" id="PS00732">
    <property type="entry name" value="RIBOSOMAL_S16"/>
    <property type="match status" value="1"/>
</dbReference>
<accession>B1LB75</accession>
<sequence>MVRIRLTRMGKRHQPFYRIVVVDSRKRRDGAYIESLGYYNPLKEGEIKIDVERAVEWILKGAQPSDTVRDIFRKFGVMKRVHEIKYGKKEEATAE</sequence>
<protein>
    <recommendedName>
        <fullName evidence="1">Small ribosomal subunit protein bS16</fullName>
    </recommendedName>
    <alternativeName>
        <fullName evidence="2">30S ribosomal protein S16</fullName>
    </alternativeName>
</protein>
<name>RS16_THESQ</name>
<evidence type="ECO:0000255" key="1">
    <source>
        <dbReference type="HAMAP-Rule" id="MF_00385"/>
    </source>
</evidence>
<evidence type="ECO:0000305" key="2"/>
<comment type="similarity">
    <text evidence="1">Belongs to the bacterial ribosomal protein bS16 family.</text>
</comment>